<organism>
    <name type="scientific">Spinacia oleracea</name>
    <name type="common">Spinach</name>
    <dbReference type="NCBI Taxonomy" id="3562"/>
    <lineage>
        <taxon>Eukaryota</taxon>
        <taxon>Viridiplantae</taxon>
        <taxon>Streptophyta</taxon>
        <taxon>Embryophyta</taxon>
        <taxon>Tracheophyta</taxon>
        <taxon>Spermatophyta</taxon>
        <taxon>Magnoliopsida</taxon>
        <taxon>eudicotyledons</taxon>
        <taxon>Gunneridae</taxon>
        <taxon>Pentapetalae</taxon>
        <taxon>Caryophyllales</taxon>
        <taxon>Chenopodiaceae</taxon>
        <taxon>Chenopodioideae</taxon>
        <taxon>Anserineae</taxon>
        <taxon>Spinacia</taxon>
    </lineage>
</organism>
<evidence type="ECO:0000250" key="1"/>
<evidence type="ECO:0000305" key="2"/>
<protein>
    <recommendedName>
        <fullName>Triosephosphate isomerase, chloroplastic</fullName>
        <shortName>TIM</shortName>
        <shortName>Triose-phosphate isomerase</shortName>
        <ecNumber>5.3.1.1</ecNumber>
    </recommendedName>
</protein>
<comment type="catalytic activity">
    <reaction>
        <text>D-glyceraldehyde 3-phosphate = dihydroxyacetone phosphate</text>
        <dbReference type="Rhea" id="RHEA:18585"/>
        <dbReference type="ChEBI" id="CHEBI:57642"/>
        <dbReference type="ChEBI" id="CHEBI:59776"/>
        <dbReference type="EC" id="5.3.1.1"/>
    </reaction>
</comment>
<comment type="pathway">
    <text>Carbohydrate biosynthesis; Calvin cycle.</text>
</comment>
<comment type="subunit">
    <text evidence="1">Homodimer.</text>
</comment>
<comment type="subcellular location">
    <subcellularLocation>
        <location>Plastid</location>
        <location>Chloroplast</location>
    </subcellularLocation>
</comment>
<comment type="miscellaneous">
    <text>In plants, there are two types of TPIS, cytosolic and plastid.</text>
</comment>
<comment type="similarity">
    <text evidence="2">Belongs to the triosephosphate isomerase family.</text>
</comment>
<keyword id="KW-0113">Calvin cycle</keyword>
<keyword id="KW-0150">Chloroplast</keyword>
<keyword id="KW-0903">Direct protein sequencing</keyword>
<keyword id="KW-0413">Isomerase</keyword>
<keyword id="KW-0934">Plastid</keyword>
<keyword id="KW-1185">Reference proteome</keyword>
<keyword id="KW-0809">Transit peptide</keyword>
<sequence>MAVVSTSLASQITNPNSAVSTQFSGLRRSFLKLENSVSTQSSFFQNVDSHLRLSSSSRRCPRGVVAMAGSGKFFVGGNWKCNGTKESITKLVSDLNSATLEADVDVVVAPPFVYIDQVKSSLTGRVEISAQNCWIGKGGAFTGEISVEQLKDLGCQWVILGHSERRHVIGEQNEFIGKKAAYALNQGVGVIACIGELLEEREAGKTFDVCYQQLKAFADALPSWDNVVVAYEPVWAIGTGKVASPDQAQEVHVAVRDWLKKNVSEEVASKTRIIYGGSVNGGNCAELAKQEDIDGFLVGGASLKGPEFATIVNSVTAKKVAA</sequence>
<proteinExistence type="evidence at protein level"/>
<accession>P48496</accession>
<gene>
    <name type="primary">TPIP1</name>
</gene>
<name>TPIC_SPIOL</name>
<reference key="1">
    <citation type="journal article" date="1994" name="Plant Mol. Biol.">
        <title>Chloroplast and cytosolic triosephosphate isomerases from spinach: purification, microsequencing and cDNA cloning of the chloroplast enzyme.</title>
        <authorList>
            <person name="Henze K."/>
            <person name="Schnarrenberger C."/>
            <person name="Kellermann J."/>
            <person name="Martin W."/>
        </authorList>
    </citation>
    <scope>NUCLEOTIDE SEQUENCE [MRNA]</scope>
    <scope>PARTIAL PROTEIN SEQUENCE</scope>
    <source>
        <strain>cv. Monnopa</strain>
        <tissue>Leaf</tissue>
        <tissue>Seedling</tissue>
    </source>
</reference>
<feature type="transit peptide" description="Chloroplast">
    <location>
        <begin position="1"/>
        <end position="67"/>
    </location>
</feature>
<feature type="chain" id="PRO_0000035652" description="Triosephosphate isomerase, chloroplastic">
    <location>
        <begin position="68"/>
        <end position="322"/>
    </location>
</feature>
<feature type="active site" description="Electrophile" evidence="1">
    <location>
        <position position="162"/>
    </location>
</feature>
<feature type="active site" description="Proton acceptor" evidence="1">
    <location>
        <position position="232"/>
    </location>
</feature>
<feature type="binding site" evidence="1">
    <location>
        <position position="78"/>
    </location>
    <ligand>
        <name>substrate</name>
    </ligand>
</feature>
<feature type="binding site" evidence="1">
    <location>
        <position position="80"/>
    </location>
    <ligand>
        <name>substrate</name>
    </ligand>
</feature>
<dbReference type="EC" id="5.3.1.1"/>
<dbReference type="EMBL" id="L36387">
    <property type="protein sequence ID" value="AAA66289.1"/>
    <property type="molecule type" value="mRNA"/>
</dbReference>
<dbReference type="PIR" id="S52032">
    <property type="entry name" value="S52032"/>
</dbReference>
<dbReference type="SMR" id="P48496"/>
<dbReference type="OrthoDB" id="6715177at2759"/>
<dbReference type="UniPathway" id="UPA00116"/>
<dbReference type="Proteomes" id="UP001155700">
    <property type="component" value="Unplaced"/>
</dbReference>
<dbReference type="GO" id="GO:0009507">
    <property type="term" value="C:chloroplast"/>
    <property type="evidence" value="ECO:0007669"/>
    <property type="project" value="UniProtKB-SubCell"/>
</dbReference>
<dbReference type="GO" id="GO:0005829">
    <property type="term" value="C:cytosol"/>
    <property type="evidence" value="ECO:0000318"/>
    <property type="project" value="GO_Central"/>
</dbReference>
<dbReference type="GO" id="GO:0004807">
    <property type="term" value="F:triose-phosphate isomerase activity"/>
    <property type="evidence" value="ECO:0000318"/>
    <property type="project" value="GO_Central"/>
</dbReference>
<dbReference type="GO" id="GO:0006094">
    <property type="term" value="P:gluconeogenesis"/>
    <property type="evidence" value="ECO:0000318"/>
    <property type="project" value="GO_Central"/>
</dbReference>
<dbReference type="GO" id="GO:0046166">
    <property type="term" value="P:glyceraldehyde-3-phosphate biosynthetic process"/>
    <property type="evidence" value="ECO:0000318"/>
    <property type="project" value="GO_Central"/>
</dbReference>
<dbReference type="GO" id="GO:0019563">
    <property type="term" value="P:glycerol catabolic process"/>
    <property type="evidence" value="ECO:0000318"/>
    <property type="project" value="GO_Central"/>
</dbReference>
<dbReference type="GO" id="GO:0006096">
    <property type="term" value="P:glycolytic process"/>
    <property type="evidence" value="ECO:0000318"/>
    <property type="project" value="GO_Central"/>
</dbReference>
<dbReference type="GO" id="GO:0019253">
    <property type="term" value="P:reductive pentose-phosphate cycle"/>
    <property type="evidence" value="ECO:0007669"/>
    <property type="project" value="UniProtKB-UniPathway"/>
</dbReference>
<dbReference type="CDD" id="cd00311">
    <property type="entry name" value="TIM"/>
    <property type="match status" value="1"/>
</dbReference>
<dbReference type="FunFam" id="3.20.20.70:FF:000025">
    <property type="entry name" value="Triosephosphate isomerase"/>
    <property type="match status" value="1"/>
</dbReference>
<dbReference type="Gene3D" id="3.20.20.70">
    <property type="entry name" value="Aldolase class I"/>
    <property type="match status" value="1"/>
</dbReference>
<dbReference type="HAMAP" id="MF_00147_B">
    <property type="entry name" value="TIM_B"/>
    <property type="match status" value="1"/>
</dbReference>
<dbReference type="InterPro" id="IPR013785">
    <property type="entry name" value="Aldolase_TIM"/>
</dbReference>
<dbReference type="InterPro" id="IPR035990">
    <property type="entry name" value="TIM_sf"/>
</dbReference>
<dbReference type="InterPro" id="IPR022896">
    <property type="entry name" value="TrioseP_Isoase_bac/euk"/>
</dbReference>
<dbReference type="InterPro" id="IPR000652">
    <property type="entry name" value="Triosephosphate_isomerase"/>
</dbReference>
<dbReference type="InterPro" id="IPR020861">
    <property type="entry name" value="Triosephosphate_isomerase_AS"/>
</dbReference>
<dbReference type="NCBIfam" id="TIGR00419">
    <property type="entry name" value="tim"/>
    <property type="match status" value="1"/>
</dbReference>
<dbReference type="PANTHER" id="PTHR21139">
    <property type="entry name" value="TRIOSEPHOSPHATE ISOMERASE"/>
    <property type="match status" value="1"/>
</dbReference>
<dbReference type="PANTHER" id="PTHR21139:SF2">
    <property type="entry name" value="TRIOSEPHOSPHATE ISOMERASE"/>
    <property type="match status" value="1"/>
</dbReference>
<dbReference type="Pfam" id="PF00121">
    <property type="entry name" value="TIM"/>
    <property type="match status" value="1"/>
</dbReference>
<dbReference type="SUPFAM" id="SSF51351">
    <property type="entry name" value="Triosephosphate isomerase (TIM)"/>
    <property type="match status" value="1"/>
</dbReference>
<dbReference type="PROSITE" id="PS00171">
    <property type="entry name" value="TIM_1"/>
    <property type="match status" value="1"/>
</dbReference>
<dbReference type="PROSITE" id="PS51440">
    <property type="entry name" value="TIM_2"/>
    <property type="match status" value="1"/>
</dbReference>